<accession>Q8EN08</accession>
<proteinExistence type="inferred from homology"/>
<protein>
    <recommendedName>
        <fullName evidence="1">Type II pantothenate kinase</fullName>
        <ecNumber evidence="1">2.7.1.33</ecNumber>
    </recommendedName>
    <alternativeName>
        <fullName evidence="1">PanK-II</fullName>
    </alternativeName>
    <alternativeName>
        <fullName evidence="1">Pantothenic acid kinase</fullName>
    </alternativeName>
</protein>
<keyword id="KW-0067">ATP-binding</keyword>
<keyword id="KW-0173">Coenzyme A biosynthesis</keyword>
<keyword id="KW-0963">Cytoplasm</keyword>
<keyword id="KW-0418">Kinase</keyword>
<keyword id="KW-0547">Nucleotide-binding</keyword>
<keyword id="KW-1185">Reference proteome</keyword>
<keyword id="KW-0808">Transferase</keyword>
<gene>
    <name evidence="1" type="primary">coaW</name>
    <name type="ordered locus">OB2682</name>
</gene>
<dbReference type="EC" id="2.7.1.33" evidence="1"/>
<dbReference type="EMBL" id="BA000028">
    <property type="protein sequence ID" value="BAC14638.1"/>
    <property type="molecule type" value="Genomic_DNA"/>
</dbReference>
<dbReference type="RefSeq" id="WP_011067076.1">
    <property type="nucleotide sequence ID" value="NC_004193.1"/>
</dbReference>
<dbReference type="SMR" id="Q8EN08"/>
<dbReference type="STRING" id="221109.gene:10734934"/>
<dbReference type="KEGG" id="oih:OB2682"/>
<dbReference type="eggNOG" id="COG5146">
    <property type="taxonomic scope" value="Bacteria"/>
</dbReference>
<dbReference type="HOGENOM" id="CLU_087521_1_0_9"/>
<dbReference type="OrthoDB" id="358216at2"/>
<dbReference type="PhylomeDB" id="Q8EN08"/>
<dbReference type="UniPathway" id="UPA00241">
    <property type="reaction ID" value="UER00352"/>
</dbReference>
<dbReference type="Proteomes" id="UP000000822">
    <property type="component" value="Chromosome"/>
</dbReference>
<dbReference type="GO" id="GO:0005829">
    <property type="term" value="C:cytosol"/>
    <property type="evidence" value="ECO:0007669"/>
    <property type="project" value="TreeGrafter"/>
</dbReference>
<dbReference type="GO" id="GO:0005524">
    <property type="term" value="F:ATP binding"/>
    <property type="evidence" value="ECO:0007669"/>
    <property type="project" value="UniProtKB-UniRule"/>
</dbReference>
<dbReference type="GO" id="GO:0004594">
    <property type="term" value="F:pantothenate kinase activity"/>
    <property type="evidence" value="ECO:0007669"/>
    <property type="project" value="UniProtKB-UniRule"/>
</dbReference>
<dbReference type="GO" id="GO:0015937">
    <property type="term" value="P:coenzyme A biosynthetic process"/>
    <property type="evidence" value="ECO:0007669"/>
    <property type="project" value="UniProtKB-UniRule"/>
</dbReference>
<dbReference type="CDD" id="cd24085">
    <property type="entry name" value="ASKHA_NBD_PanK-II_bac"/>
    <property type="match status" value="1"/>
</dbReference>
<dbReference type="Gene3D" id="3.30.420.40">
    <property type="match status" value="1"/>
</dbReference>
<dbReference type="HAMAP" id="MF_01273">
    <property type="entry name" value="Pantothen_kinase_2"/>
    <property type="match status" value="1"/>
</dbReference>
<dbReference type="InterPro" id="IPR043129">
    <property type="entry name" value="ATPase_NBD"/>
</dbReference>
<dbReference type="InterPro" id="IPR004567">
    <property type="entry name" value="Type_II_PanK"/>
</dbReference>
<dbReference type="InterPro" id="IPR011602">
    <property type="entry name" value="Type_II_PanK_bac"/>
</dbReference>
<dbReference type="NCBIfam" id="TIGR00555">
    <property type="entry name" value="panK_eukar"/>
    <property type="match status" value="1"/>
</dbReference>
<dbReference type="NCBIfam" id="NF009842">
    <property type="entry name" value="PRK13317.1"/>
    <property type="match status" value="1"/>
</dbReference>
<dbReference type="PANTHER" id="PTHR12280:SF20">
    <property type="entry name" value="4'-PHOSPHOPANTETHEINE PHOSPHATASE"/>
    <property type="match status" value="1"/>
</dbReference>
<dbReference type="PANTHER" id="PTHR12280">
    <property type="entry name" value="PANTOTHENATE KINASE"/>
    <property type="match status" value="1"/>
</dbReference>
<dbReference type="Pfam" id="PF03630">
    <property type="entry name" value="Fumble"/>
    <property type="match status" value="1"/>
</dbReference>
<dbReference type="PIRSF" id="PIRSF036940">
    <property type="entry name" value="PanK_bac_aCoA"/>
    <property type="match status" value="1"/>
</dbReference>
<dbReference type="SUPFAM" id="SSF53067">
    <property type="entry name" value="Actin-like ATPase domain"/>
    <property type="match status" value="2"/>
</dbReference>
<comment type="function">
    <text evidence="1">Catalyzes the phosphorylation of pantothenate (Pan), the first step in CoA biosynthesis.</text>
</comment>
<comment type="catalytic activity">
    <reaction evidence="1">
        <text>(R)-pantothenate + ATP = (R)-4'-phosphopantothenate + ADP + H(+)</text>
        <dbReference type="Rhea" id="RHEA:16373"/>
        <dbReference type="ChEBI" id="CHEBI:10986"/>
        <dbReference type="ChEBI" id="CHEBI:15378"/>
        <dbReference type="ChEBI" id="CHEBI:29032"/>
        <dbReference type="ChEBI" id="CHEBI:30616"/>
        <dbReference type="ChEBI" id="CHEBI:456216"/>
        <dbReference type="EC" id="2.7.1.33"/>
    </reaction>
</comment>
<comment type="pathway">
    <text evidence="1">Cofactor biosynthesis; coenzyme A biosynthesis; CoA from (R)-pantothenate: step 1/5.</text>
</comment>
<comment type="subunit">
    <text evidence="1">Homodimer.</text>
</comment>
<comment type="subcellular location">
    <subcellularLocation>
        <location evidence="1">Cytoplasm</location>
    </subcellularLocation>
</comment>
<comment type="similarity">
    <text evidence="1">Belongs to the type II pantothenate kinase family.</text>
</comment>
<sequence length="262" mass="28739">MKRIGIDAGGSLVKVAYEEHGKMHLKTYSSHKMEEVIQWLKTLSPYASFHITGGRSRELNLEGYRVYTIPEFKAIMEGTSYLLHQERKLPKSDYLLVNIGTGTSIFYNENRIAGTGIGGGLLTGLGELLTKESSYTQLIQMAKQGDRTKSDLMVRDIYKDSTSPIDETLTAANFGKVGLDPSNSKEDQMAALIQLIGETILLISHGAAQSVKTSQIVFIGGTLTNNQPLQRVFLHFQEQMNYTATFLNNGGHAGAIGAMLSS</sequence>
<name>COAW_OCEIH</name>
<organism>
    <name type="scientific">Oceanobacillus iheyensis (strain DSM 14371 / CIP 107618 / JCM 11309 / KCTC 3954 / HTE831)</name>
    <dbReference type="NCBI Taxonomy" id="221109"/>
    <lineage>
        <taxon>Bacteria</taxon>
        <taxon>Bacillati</taxon>
        <taxon>Bacillota</taxon>
        <taxon>Bacilli</taxon>
        <taxon>Bacillales</taxon>
        <taxon>Bacillaceae</taxon>
        <taxon>Oceanobacillus</taxon>
    </lineage>
</organism>
<feature type="chain" id="PRO_0000261342" description="Type II pantothenate kinase">
    <location>
        <begin position="1"/>
        <end position="262"/>
    </location>
</feature>
<feature type="active site" description="Proton acceptor" evidence="1">
    <location>
        <position position="71"/>
    </location>
</feature>
<feature type="binding site" evidence="1">
    <location>
        <begin position="7"/>
        <end position="14"/>
    </location>
    <ligand>
        <name>ATP</name>
        <dbReference type="ChEBI" id="CHEBI:30616"/>
    </ligand>
</feature>
<feature type="binding site" evidence="1">
    <location>
        <position position="101"/>
    </location>
    <ligand>
        <name>ATP</name>
        <dbReference type="ChEBI" id="CHEBI:30616"/>
    </ligand>
</feature>
<feature type="binding site" evidence="1">
    <location>
        <begin position="119"/>
        <end position="123"/>
    </location>
    <ligand>
        <name>ATP</name>
        <dbReference type="ChEBI" id="CHEBI:30616"/>
    </ligand>
</feature>
<feature type="binding site" evidence="1">
    <location>
        <position position="135"/>
    </location>
    <ligand>
        <name>ATP</name>
        <dbReference type="ChEBI" id="CHEBI:30616"/>
    </ligand>
</feature>
<evidence type="ECO:0000255" key="1">
    <source>
        <dbReference type="HAMAP-Rule" id="MF_01273"/>
    </source>
</evidence>
<reference key="1">
    <citation type="journal article" date="2002" name="Nucleic Acids Res.">
        <title>Genome sequence of Oceanobacillus iheyensis isolated from the Iheya Ridge and its unexpected adaptive capabilities to extreme environments.</title>
        <authorList>
            <person name="Takami H."/>
            <person name="Takaki Y."/>
            <person name="Uchiyama I."/>
        </authorList>
    </citation>
    <scope>NUCLEOTIDE SEQUENCE [LARGE SCALE GENOMIC DNA]</scope>
    <source>
        <strain>DSM 14371 / CIP 107618 / JCM 11309 / KCTC 3954 / HTE831</strain>
    </source>
</reference>